<protein>
    <recommendedName>
        <fullName evidence="4">Isopentenyl phosphate kinase</fullName>
        <shortName evidence="5">AtIPK</shortName>
        <shortName evidence="4">IPK</shortName>
        <ecNumber evidence="2 3">2.7.4.26</ecNumber>
    </recommendedName>
</protein>
<dbReference type="EC" id="2.7.4.26" evidence="2 3"/>
<dbReference type="EMBL" id="AC006535">
    <property type="protein sequence ID" value="AAF87047.1"/>
    <property type="status" value="ALT_SEQ"/>
    <property type="molecule type" value="Genomic_DNA"/>
</dbReference>
<dbReference type="EMBL" id="CP002684">
    <property type="protein sequence ID" value="AEE30713.1"/>
    <property type="molecule type" value="Genomic_DNA"/>
</dbReference>
<dbReference type="EMBL" id="AY065221">
    <property type="protein sequence ID" value="AAL38697.1"/>
    <property type="molecule type" value="mRNA"/>
</dbReference>
<dbReference type="EMBL" id="AY150412">
    <property type="protein sequence ID" value="AAN12957.1"/>
    <property type="molecule type" value="mRNA"/>
</dbReference>
<dbReference type="PIR" id="E86393">
    <property type="entry name" value="E86393"/>
</dbReference>
<dbReference type="RefSeq" id="NP_173986.2">
    <property type="nucleotide sequence ID" value="NM_102426.6"/>
</dbReference>
<dbReference type="SMR" id="Q8H1F7"/>
<dbReference type="FunCoup" id="Q8H1F7">
    <property type="interactions" value="300"/>
</dbReference>
<dbReference type="STRING" id="3702.Q8H1F7"/>
<dbReference type="iPTMnet" id="Q8H1F7"/>
<dbReference type="PaxDb" id="3702-AT1G26640.1"/>
<dbReference type="ProteomicsDB" id="248474"/>
<dbReference type="DNASU" id="839204"/>
<dbReference type="EnsemblPlants" id="AT1G26640.1">
    <property type="protein sequence ID" value="AT1G26640.1"/>
    <property type="gene ID" value="AT1G26640"/>
</dbReference>
<dbReference type="GeneID" id="839204"/>
<dbReference type="Gramene" id="AT1G26640.1">
    <property type="protein sequence ID" value="AT1G26640.1"/>
    <property type="gene ID" value="AT1G26640"/>
</dbReference>
<dbReference type="KEGG" id="ath:AT1G26640"/>
<dbReference type="Araport" id="AT1G26640"/>
<dbReference type="TAIR" id="AT1G26640">
    <property type="gene designation" value="IPK"/>
</dbReference>
<dbReference type="eggNOG" id="ENOG502QQ1X">
    <property type="taxonomic scope" value="Eukaryota"/>
</dbReference>
<dbReference type="HOGENOM" id="CLU_070213_0_0_1"/>
<dbReference type="InParanoid" id="Q8H1F7"/>
<dbReference type="OMA" id="SIRCIVK"/>
<dbReference type="PhylomeDB" id="Q8H1F7"/>
<dbReference type="BRENDA" id="2.7.4.26">
    <property type="organism ID" value="399"/>
</dbReference>
<dbReference type="PRO" id="PR:Q8H1F7"/>
<dbReference type="Proteomes" id="UP000006548">
    <property type="component" value="Chromosome 1"/>
</dbReference>
<dbReference type="ExpressionAtlas" id="Q8H1F7">
    <property type="expression patterns" value="baseline and differential"/>
</dbReference>
<dbReference type="GO" id="GO:0005829">
    <property type="term" value="C:cytosol"/>
    <property type="evidence" value="ECO:0000314"/>
    <property type="project" value="TAIR"/>
</dbReference>
<dbReference type="GO" id="GO:0005524">
    <property type="term" value="F:ATP binding"/>
    <property type="evidence" value="ECO:0007669"/>
    <property type="project" value="UniProtKB-KW"/>
</dbReference>
<dbReference type="GO" id="GO:0102043">
    <property type="term" value="F:isopentenyl phosphate kinase activity"/>
    <property type="evidence" value="ECO:0000314"/>
    <property type="project" value="UniProtKB"/>
</dbReference>
<dbReference type="GO" id="GO:0016301">
    <property type="term" value="F:kinase activity"/>
    <property type="evidence" value="ECO:0007669"/>
    <property type="project" value="UniProtKB-KW"/>
</dbReference>
<dbReference type="GO" id="GO:0016114">
    <property type="term" value="P:terpenoid biosynthetic process"/>
    <property type="evidence" value="ECO:0000314"/>
    <property type="project" value="UniProtKB"/>
</dbReference>
<dbReference type="CDD" id="cd04241">
    <property type="entry name" value="AAK_FomA-like"/>
    <property type="match status" value="1"/>
</dbReference>
<dbReference type="Gene3D" id="3.40.1160.10">
    <property type="entry name" value="Acetylglutamate kinase-like"/>
    <property type="match status" value="1"/>
</dbReference>
<dbReference type="InterPro" id="IPR036393">
    <property type="entry name" value="AceGlu_kinase-like_sf"/>
</dbReference>
<dbReference type="InterPro" id="IPR001048">
    <property type="entry name" value="Asp/Glu/Uridylate_kinase"/>
</dbReference>
<dbReference type="InterPro" id="IPR024192">
    <property type="entry name" value="Fosfomycin_R_FomA-type"/>
</dbReference>
<dbReference type="NCBIfam" id="NF040647">
    <property type="entry name" value="IPPK_Arch"/>
    <property type="match status" value="1"/>
</dbReference>
<dbReference type="PANTHER" id="PTHR43654">
    <property type="entry name" value="GLUTAMATE 5-KINASE"/>
    <property type="match status" value="1"/>
</dbReference>
<dbReference type="PANTHER" id="PTHR43654:SF1">
    <property type="entry name" value="ISOPENTENYL PHOSPHATE KINASE"/>
    <property type="match status" value="1"/>
</dbReference>
<dbReference type="Pfam" id="PF00696">
    <property type="entry name" value="AA_kinase"/>
    <property type="match status" value="1"/>
</dbReference>
<dbReference type="PIRSF" id="PIRSF016496">
    <property type="entry name" value="Kin_FomA"/>
    <property type="match status" value="1"/>
</dbReference>
<dbReference type="SUPFAM" id="SSF53633">
    <property type="entry name" value="Carbamate kinase-like"/>
    <property type="match status" value="1"/>
</dbReference>
<comment type="function">
    <text evidence="2 3">Catalyzes the formation of isopentenyl diphosphate (IPP), the universal five-carbon isoprenoid building block of all natural isoprenoids (PubMed:24327557, PubMed:26216978). Acts in parallel with the mevalonate (MVA) pathway and plays an important role in regulating the formation of both MVA and methylerythritol phosphate (MEP) pathway-derived terpenoid compounds by controlling the ratio of isopentenyl phosphate (IP) and dimethylallyl phosphate (DMAP) to isopentenyl diphosphate (IPP) and dimethylallyl diphosphate (DMAPP). Controls the levels of IP and DMAP that are competitive inhibitors of the farnesyl diphosphate synthase. Regulates the production of farnesyl diphosphate-derived terpenoids in the cytosol, and geranyl diphosphate-derived compounds in plastids (PubMed:26216978).</text>
</comment>
<comment type="catalytic activity">
    <reaction evidence="2 3">
        <text>isopentenyl phosphate + ATP = isopentenyl diphosphate + ADP</text>
        <dbReference type="Rhea" id="RHEA:33963"/>
        <dbReference type="ChEBI" id="CHEBI:30616"/>
        <dbReference type="ChEBI" id="CHEBI:65078"/>
        <dbReference type="ChEBI" id="CHEBI:128769"/>
        <dbReference type="ChEBI" id="CHEBI:456216"/>
        <dbReference type="EC" id="2.7.4.26"/>
    </reaction>
</comment>
<comment type="biophysicochemical properties">
    <kinetics>
        <KM evidence="2">0.79 uM for isopentenyl phosphate</KM>
        <KM evidence="3">32 uM for isopentenyl phosphate</KM>
        <KM evidence="3">33 uM for dimethylallyl diphosphate</KM>
        <KM evidence="3">220 uM for geranyl phosphate</KM>
        <text evidence="2 3">kcat is 1.9 sec(-1) with isopentenyl phosphate (PubMed:24327557). kcat is 3.7 sec(-1) with isopentenyl phosphate (PubMed:26216978). kcat is 2.7 sec(-1) with dimethylallyl diphosphate (PubMed:26216978). kcat is 0.0039 sec(-1) with geranyl phosphate (PubMed:26216978).</text>
    </kinetics>
</comment>
<comment type="subcellular location">
    <subcellularLocation>
        <location evidence="3">Cytoplasm</location>
        <location evidence="3">Cytosol</location>
    </subcellularLocation>
</comment>
<comment type="similarity">
    <text evidence="6">Belongs to the isopentenyl phosphate kinase family.</text>
</comment>
<comment type="sequence caution" evidence="6">
    <conflict type="erroneous gene model prediction">
        <sequence resource="EMBL-CDS" id="AAF87047"/>
    </conflict>
</comment>
<name>IPK_ARATH</name>
<gene>
    <name evidence="4 5" type="primary">IPK</name>
    <name evidence="7" type="ordered locus">At1g26640</name>
    <name evidence="8" type="ORF">T24P13.2</name>
</gene>
<proteinExistence type="evidence at protein level"/>
<sequence>MELNISESRSRSIRCIVKLGGAAITCKNELEKIHDENLEVVACQLRQAMLEGSAPSKVIGMDWSKRPGSSEISCDVDDIGDQKSSEFSKFVVVHGAGSFGHFQASRSGVHKGGLEKPIVKAGFVATRISVTNLNLEIVRALAREGIPTIGMSPFSCGWSTSKRDVASADLATVAKTIDSGFVPVLHGDAVLDNILGCTILSGDVIIRHLADHLKPEYVVFLTDVLGVYDRPPSPSEPDAVLLKEIAVGEDGSWKVVNPLLEHTDKKVDYSVAAHDTTGGMETKISEAAMIAKLGVDVYIVKAATTHSQRALNGDLRDSVPEDWLGTIIRFSK</sequence>
<feature type="chain" id="PRO_0000444195" description="Isopentenyl phosphate kinase">
    <location>
        <begin position="1"/>
        <end position="332"/>
    </location>
</feature>
<feature type="binding site" evidence="1">
    <location>
        <begin position="18"/>
        <end position="22"/>
    </location>
    <ligand>
        <name>ATP</name>
        <dbReference type="ChEBI" id="CHEBI:30616"/>
    </ligand>
</feature>
<feature type="binding site" evidence="1">
    <location>
        <position position="96"/>
    </location>
    <ligand>
        <name>substrate</name>
    </ligand>
</feature>
<feature type="binding site" evidence="1">
    <location>
        <position position="97"/>
    </location>
    <ligand>
        <name>ATP</name>
        <dbReference type="ChEBI" id="CHEBI:30616"/>
    </ligand>
</feature>
<feature type="binding site" evidence="1">
    <location>
        <position position="101"/>
    </location>
    <ligand>
        <name>substrate</name>
    </ligand>
</feature>
<feature type="binding site" evidence="1">
    <location>
        <position position="202"/>
    </location>
    <ligand>
        <name>substrate</name>
    </ligand>
</feature>
<feature type="binding site" evidence="1">
    <location>
        <position position="223"/>
    </location>
    <ligand>
        <name>ATP</name>
        <dbReference type="ChEBI" id="CHEBI:30616"/>
    </ligand>
</feature>
<feature type="binding site" evidence="1">
    <location>
        <begin position="228"/>
        <end position="233"/>
    </location>
    <ligand>
        <name>ATP</name>
        <dbReference type="ChEBI" id="CHEBI:30616"/>
    </ligand>
</feature>
<feature type="binding site" evidence="1">
    <location>
        <position position="279"/>
    </location>
    <ligand>
        <name>ATP</name>
        <dbReference type="ChEBI" id="CHEBI:30616"/>
    </ligand>
</feature>
<feature type="binding site" evidence="1">
    <location>
        <position position="283"/>
    </location>
    <ligand>
        <name>ATP</name>
        <dbReference type="ChEBI" id="CHEBI:30616"/>
    </ligand>
</feature>
<feature type="site" description="Transition state stabilizer" evidence="1">
    <location>
        <position position="27"/>
    </location>
</feature>
<feature type="modified residue" description="N-acetylmethionine" evidence="9">
    <location>
        <position position="1"/>
    </location>
</feature>
<feature type="sequence conflict" description="In Ref. 3; AAL38697." evidence="6" ref="3">
    <original>V</original>
    <variation>L</variation>
    <location>
        <position position="240"/>
    </location>
</feature>
<organism>
    <name type="scientific">Arabidopsis thaliana</name>
    <name type="common">Mouse-ear cress</name>
    <dbReference type="NCBI Taxonomy" id="3702"/>
    <lineage>
        <taxon>Eukaryota</taxon>
        <taxon>Viridiplantae</taxon>
        <taxon>Streptophyta</taxon>
        <taxon>Embryophyta</taxon>
        <taxon>Tracheophyta</taxon>
        <taxon>Spermatophyta</taxon>
        <taxon>Magnoliopsida</taxon>
        <taxon>eudicotyledons</taxon>
        <taxon>Gunneridae</taxon>
        <taxon>Pentapetalae</taxon>
        <taxon>rosids</taxon>
        <taxon>malvids</taxon>
        <taxon>Brassicales</taxon>
        <taxon>Brassicaceae</taxon>
        <taxon>Camelineae</taxon>
        <taxon>Arabidopsis</taxon>
    </lineage>
</organism>
<reference key="1">
    <citation type="journal article" date="2000" name="Nature">
        <title>Sequence and analysis of chromosome 1 of the plant Arabidopsis thaliana.</title>
        <authorList>
            <person name="Theologis A."/>
            <person name="Ecker J.R."/>
            <person name="Palm C.J."/>
            <person name="Federspiel N.A."/>
            <person name="Kaul S."/>
            <person name="White O."/>
            <person name="Alonso J."/>
            <person name="Altafi H."/>
            <person name="Araujo R."/>
            <person name="Bowman C.L."/>
            <person name="Brooks S.Y."/>
            <person name="Buehler E."/>
            <person name="Chan A."/>
            <person name="Chao Q."/>
            <person name="Chen H."/>
            <person name="Cheuk R.F."/>
            <person name="Chin C.W."/>
            <person name="Chung M.K."/>
            <person name="Conn L."/>
            <person name="Conway A.B."/>
            <person name="Conway A.R."/>
            <person name="Creasy T.H."/>
            <person name="Dewar K."/>
            <person name="Dunn P."/>
            <person name="Etgu P."/>
            <person name="Feldblyum T.V."/>
            <person name="Feng J.-D."/>
            <person name="Fong B."/>
            <person name="Fujii C.Y."/>
            <person name="Gill J.E."/>
            <person name="Goldsmith A.D."/>
            <person name="Haas B."/>
            <person name="Hansen N.F."/>
            <person name="Hughes B."/>
            <person name="Huizar L."/>
            <person name="Hunter J.L."/>
            <person name="Jenkins J."/>
            <person name="Johnson-Hopson C."/>
            <person name="Khan S."/>
            <person name="Khaykin E."/>
            <person name="Kim C.J."/>
            <person name="Koo H.L."/>
            <person name="Kremenetskaia I."/>
            <person name="Kurtz D.B."/>
            <person name="Kwan A."/>
            <person name="Lam B."/>
            <person name="Langin-Hooper S."/>
            <person name="Lee A."/>
            <person name="Lee J.M."/>
            <person name="Lenz C.A."/>
            <person name="Li J.H."/>
            <person name="Li Y.-P."/>
            <person name="Lin X."/>
            <person name="Liu S.X."/>
            <person name="Liu Z.A."/>
            <person name="Luros J.S."/>
            <person name="Maiti R."/>
            <person name="Marziali A."/>
            <person name="Militscher J."/>
            <person name="Miranda M."/>
            <person name="Nguyen M."/>
            <person name="Nierman W.C."/>
            <person name="Osborne B.I."/>
            <person name="Pai G."/>
            <person name="Peterson J."/>
            <person name="Pham P.K."/>
            <person name="Rizzo M."/>
            <person name="Rooney T."/>
            <person name="Rowley D."/>
            <person name="Sakano H."/>
            <person name="Salzberg S.L."/>
            <person name="Schwartz J.R."/>
            <person name="Shinn P."/>
            <person name="Southwick A.M."/>
            <person name="Sun H."/>
            <person name="Tallon L.J."/>
            <person name="Tambunga G."/>
            <person name="Toriumi M.J."/>
            <person name="Town C.D."/>
            <person name="Utterback T."/>
            <person name="Van Aken S."/>
            <person name="Vaysberg M."/>
            <person name="Vysotskaia V.S."/>
            <person name="Walker M."/>
            <person name="Wu D."/>
            <person name="Yu G."/>
            <person name="Fraser C.M."/>
            <person name="Venter J.C."/>
            <person name="Davis R.W."/>
        </authorList>
    </citation>
    <scope>NUCLEOTIDE SEQUENCE [LARGE SCALE GENOMIC DNA]</scope>
    <source>
        <strain>cv. Columbia</strain>
    </source>
</reference>
<reference key="2">
    <citation type="journal article" date="2017" name="Plant J.">
        <title>Araport11: a complete reannotation of the Arabidopsis thaliana reference genome.</title>
        <authorList>
            <person name="Cheng C.Y."/>
            <person name="Krishnakumar V."/>
            <person name="Chan A.P."/>
            <person name="Thibaud-Nissen F."/>
            <person name="Schobel S."/>
            <person name="Town C.D."/>
        </authorList>
    </citation>
    <scope>GENOME REANNOTATION</scope>
    <source>
        <strain>cv. Columbia</strain>
    </source>
</reference>
<reference key="3">
    <citation type="journal article" date="2003" name="Science">
        <title>Empirical analysis of transcriptional activity in the Arabidopsis genome.</title>
        <authorList>
            <person name="Yamada K."/>
            <person name="Lim J."/>
            <person name="Dale J.M."/>
            <person name="Chen H."/>
            <person name="Shinn P."/>
            <person name="Palm C.J."/>
            <person name="Southwick A.M."/>
            <person name="Wu H.C."/>
            <person name="Kim C.J."/>
            <person name="Nguyen M."/>
            <person name="Pham P.K."/>
            <person name="Cheuk R.F."/>
            <person name="Karlin-Newmann G."/>
            <person name="Liu S.X."/>
            <person name="Lam B."/>
            <person name="Sakano H."/>
            <person name="Wu T."/>
            <person name="Yu G."/>
            <person name="Miranda M."/>
            <person name="Quach H.L."/>
            <person name="Tripp M."/>
            <person name="Chang C.H."/>
            <person name="Lee J.M."/>
            <person name="Toriumi M.J."/>
            <person name="Chan M.M."/>
            <person name="Tang C.C."/>
            <person name="Onodera C.S."/>
            <person name="Deng J.M."/>
            <person name="Akiyama K."/>
            <person name="Ansari Y."/>
            <person name="Arakawa T."/>
            <person name="Banh J."/>
            <person name="Banno F."/>
            <person name="Bowser L."/>
            <person name="Brooks S.Y."/>
            <person name="Carninci P."/>
            <person name="Chao Q."/>
            <person name="Choy N."/>
            <person name="Enju A."/>
            <person name="Goldsmith A.D."/>
            <person name="Gurjal M."/>
            <person name="Hansen N.F."/>
            <person name="Hayashizaki Y."/>
            <person name="Johnson-Hopson C."/>
            <person name="Hsuan V.W."/>
            <person name="Iida K."/>
            <person name="Karnes M."/>
            <person name="Khan S."/>
            <person name="Koesema E."/>
            <person name="Ishida J."/>
            <person name="Jiang P.X."/>
            <person name="Jones T."/>
            <person name="Kawai J."/>
            <person name="Kamiya A."/>
            <person name="Meyers C."/>
            <person name="Nakajima M."/>
            <person name="Narusaka M."/>
            <person name="Seki M."/>
            <person name="Sakurai T."/>
            <person name="Satou M."/>
            <person name="Tamse R."/>
            <person name="Vaysberg M."/>
            <person name="Wallender E.K."/>
            <person name="Wong C."/>
            <person name="Yamamura Y."/>
            <person name="Yuan S."/>
            <person name="Shinozaki K."/>
            <person name="Davis R.W."/>
            <person name="Theologis A."/>
            <person name="Ecker J.R."/>
        </authorList>
    </citation>
    <scope>NUCLEOTIDE SEQUENCE [LARGE SCALE MRNA]</scope>
    <source>
        <strain>cv. Columbia</strain>
    </source>
</reference>
<reference key="4">
    <citation type="journal article" date="2012" name="Mol. Cell. Proteomics">
        <title>Comparative large-scale characterisation of plant vs. mammal proteins reveals similar and idiosyncratic N-alpha acetylation features.</title>
        <authorList>
            <person name="Bienvenut W.V."/>
            <person name="Sumpton D."/>
            <person name="Martinez A."/>
            <person name="Lilla S."/>
            <person name="Espagne C."/>
            <person name="Meinnel T."/>
            <person name="Giglione C."/>
        </authorList>
    </citation>
    <scope>ACETYLATION [LARGE SCALE ANALYSIS] AT MET-1</scope>
    <scope>IDENTIFICATION BY MASS SPECTROMETRY [LARGE SCALE ANALYSIS]</scope>
</reference>
<reference key="5">
    <citation type="journal article" date="2013" name="Elife">
        <title>Discovery of a metabolic alternative to the classical mevalonate pathway.</title>
        <authorList>
            <person name="Dellas N."/>
            <person name="Thomas S.T."/>
            <person name="Manning G."/>
            <person name="Noel J.P."/>
        </authorList>
    </citation>
    <scope>FUNCTION</scope>
    <scope>CATALYTIC ACTIVITY</scope>
    <scope>BIOPHYSICOCHEMICAL PROPERTIES</scope>
</reference>
<reference key="6">
    <citation type="journal article" date="2015" name="Proc. Natl. Acad. Sci. U.S.A.">
        <title>Orthologs of the archaeal isopentenyl phosphate kinase regulate terpenoid production in plants.</title>
        <authorList>
            <person name="Henry L.K."/>
            <person name="Gutensohn M."/>
            <person name="Thomas S.T."/>
            <person name="Noel J.P."/>
            <person name="Dudareva N."/>
        </authorList>
    </citation>
    <scope>FUNCTION</scope>
    <scope>CATALYTIC ACTIVITY</scope>
    <scope>BIOPHYSICOCHEMICAL PROPERTIES</scope>
    <scope>SUBCELLULAR LOCATION</scope>
</reference>
<evidence type="ECO:0000250" key="1">
    <source>
        <dbReference type="UniProtKB" id="Q9HLX1"/>
    </source>
</evidence>
<evidence type="ECO:0000269" key="2">
    <source>
    </source>
</evidence>
<evidence type="ECO:0000269" key="3">
    <source>
    </source>
</evidence>
<evidence type="ECO:0000303" key="4">
    <source>
    </source>
</evidence>
<evidence type="ECO:0000303" key="5">
    <source>
    </source>
</evidence>
<evidence type="ECO:0000305" key="6"/>
<evidence type="ECO:0000312" key="7">
    <source>
        <dbReference type="Araport" id="AT1G26640"/>
    </source>
</evidence>
<evidence type="ECO:0000312" key="8">
    <source>
        <dbReference type="EMBL" id="AAF87047.1"/>
    </source>
</evidence>
<evidence type="ECO:0007744" key="9">
    <source>
    </source>
</evidence>
<keyword id="KW-0007">Acetylation</keyword>
<keyword id="KW-0067">ATP-binding</keyword>
<keyword id="KW-0963">Cytoplasm</keyword>
<keyword id="KW-0414">Isoprene biosynthesis</keyword>
<keyword id="KW-0418">Kinase</keyword>
<keyword id="KW-0547">Nucleotide-binding</keyword>
<keyword id="KW-1185">Reference proteome</keyword>
<keyword id="KW-0808">Transferase</keyword>
<accession>Q8H1F7</accession>
<accession>Q8VZ62</accession>
<accession>Q9LQY8</accession>